<sequence length="222" mass="24735">MSPSAGLQFSLYFLQTKKVLWKLTDKEKGLCYILLFTLCFFADQENGGKALASPPGIWKRADVTFDSNTAFSSLVVSANKKTVKNVGVPQVVPDNPERFNSSPCVLGSPGFRSGKHYFEVKYGTQREWAVGIAGKSVKRKGNLMLVPEERIWQMGLWWLRHLETDPGRVHSTSGKITVFVDYNGGNVIFDLNRINTTLKANFNGEEVVPFFYLGGTVSLTTL</sequence>
<name>VESP_CROAD</name>
<evidence type="ECO:0000250" key="1"/>
<evidence type="ECO:0000250" key="2">
    <source>
        <dbReference type="UniProtKB" id="P83234"/>
    </source>
</evidence>
<evidence type="ECO:0000255" key="3"/>
<evidence type="ECO:0000255" key="4">
    <source>
        <dbReference type="PROSITE-ProRule" id="PRU00548"/>
    </source>
</evidence>
<evidence type="ECO:0000269" key="5">
    <source>
    </source>
</evidence>
<evidence type="ECO:0000303" key="6">
    <source>
    </source>
</evidence>
<evidence type="ECO:0000305" key="7"/>
<evidence type="ECO:0000305" key="8">
    <source>
    </source>
</evidence>
<dbReference type="EMBL" id="HQ414126">
    <property type="protein sequence ID" value="AEJ32004.1"/>
    <property type="molecule type" value="mRNA"/>
</dbReference>
<dbReference type="EMBL" id="JU173741">
    <property type="protein sequence ID" value="AFJ49267.1"/>
    <property type="molecule type" value="mRNA"/>
</dbReference>
<dbReference type="SMR" id="F8S122"/>
<dbReference type="GO" id="GO:0005576">
    <property type="term" value="C:extracellular region"/>
    <property type="evidence" value="ECO:0007669"/>
    <property type="project" value="UniProtKB-SubCell"/>
</dbReference>
<dbReference type="GO" id="GO:0090729">
    <property type="term" value="F:toxin activity"/>
    <property type="evidence" value="ECO:0007669"/>
    <property type="project" value="UniProtKB-KW"/>
</dbReference>
<dbReference type="Gene3D" id="2.60.120.920">
    <property type="match status" value="1"/>
</dbReference>
<dbReference type="InterPro" id="IPR001870">
    <property type="entry name" value="B30.2/SPRY"/>
</dbReference>
<dbReference type="InterPro" id="IPR043136">
    <property type="entry name" value="B30.2/SPRY_sf"/>
</dbReference>
<dbReference type="InterPro" id="IPR003879">
    <property type="entry name" value="Butyrophylin_SPRY"/>
</dbReference>
<dbReference type="InterPro" id="IPR013320">
    <property type="entry name" value="ConA-like_dom_sf"/>
</dbReference>
<dbReference type="InterPro" id="IPR006574">
    <property type="entry name" value="PRY"/>
</dbReference>
<dbReference type="InterPro" id="IPR003877">
    <property type="entry name" value="SPRY_dom"/>
</dbReference>
<dbReference type="InterPro" id="IPR050143">
    <property type="entry name" value="TRIM/RBCC"/>
</dbReference>
<dbReference type="PANTHER" id="PTHR24103">
    <property type="entry name" value="E3 UBIQUITIN-PROTEIN LIGASE TRIM"/>
    <property type="match status" value="1"/>
</dbReference>
<dbReference type="Pfam" id="PF13765">
    <property type="entry name" value="PRY"/>
    <property type="match status" value="1"/>
</dbReference>
<dbReference type="Pfam" id="PF00622">
    <property type="entry name" value="SPRY"/>
    <property type="match status" value="1"/>
</dbReference>
<dbReference type="PRINTS" id="PR01407">
    <property type="entry name" value="BUTYPHLNCDUF"/>
</dbReference>
<dbReference type="SMART" id="SM00589">
    <property type="entry name" value="PRY"/>
    <property type="match status" value="1"/>
</dbReference>
<dbReference type="SMART" id="SM00449">
    <property type="entry name" value="SPRY"/>
    <property type="match status" value="1"/>
</dbReference>
<dbReference type="SUPFAM" id="SSF49899">
    <property type="entry name" value="Concanavalin A-like lectins/glucanases"/>
    <property type="match status" value="1"/>
</dbReference>
<dbReference type="PROSITE" id="PS50188">
    <property type="entry name" value="B302_SPRY"/>
    <property type="match status" value="1"/>
</dbReference>
<protein>
    <recommendedName>
        <fullName evidence="6">Vespryn</fullName>
    </recommendedName>
</protein>
<organism>
    <name type="scientific">Crotalus adamanteus</name>
    <name type="common">Eastern diamondback rattlesnake</name>
    <dbReference type="NCBI Taxonomy" id="8729"/>
    <lineage>
        <taxon>Eukaryota</taxon>
        <taxon>Metazoa</taxon>
        <taxon>Chordata</taxon>
        <taxon>Craniata</taxon>
        <taxon>Vertebrata</taxon>
        <taxon>Euteleostomi</taxon>
        <taxon>Lepidosauria</taxon>
        <taxon>Squamata</taxon>
        <taxon>Bifurcata</taxon>
        <taxon>Unidentata</taxon>
        <taxon>Episquamata</taxon>
        <taxon>Toxicofera</taxon>
        <taxon>Serpentes</taxon>
        <taxon>Colubroidea</taxon>
        <taxon>Viperidae</taxon>
        <taxon>Crotalinae</taxon>
        <taxon>Crotalus</taxon>
    </lineage>
</organism>
<keyword id="KW-0325">Glycoprotein</keyword>
<keyword id="KW-0528">Neurotoxin</keyword>
<keyword id="KW-0964">Secreted</keyword>
<keyword id="KW-0732">Signal</keyword>
<keyword id="KW-0800">Toxin</keyword>
<proteinExistence type="evidence at protein level"/>
<comment type="function">
    <text evidence="2">Neurotoxin that produces dose-dependent hypolocomotion and hyperalgesia in mice. May directly act on the central nervous system, as it is 6500-fold more potent when administered intracerebroventricularly than intraperitoneal.</text>
</comment>
<comment type="subcellular location">
    <subcellularLocation>
        <location evidence="5">Secreted</location>
    </subcellularLocation>
</comment>
<comment type="tissue specificity">
    <text evidence="8">Expressed by the venom gland.</text>
</comment>
<comment type="similarity">
    <text evidence="7">Belongs to the ohanin/vespryn family.</text>
</comment>
<accession>F8S122</accession>
<feature type="signal peptide" evidence="3">
    <location>
        <begin position="1"/>
        <end position="44"/>
    </location>
</feature>
<feature type="propeptide" id="PRO_0000425651" evidence="3">
    <location>
        <begin position="45"/>
        <end position="52"/>
    </location>
</feature>
<feature type="chain" id="PRO_0000425652" description="Vespryn">
    <location>
        <begin position="53"/>
        <end position="159"/>
    </location>
</feature>
<feature type="propeptide" id="PRO_0000425653" evidence="1">
    <location>
        <begin position="160"/>
        <end position="222"/>
    </location>
</feature>
<feature type="domain" description="B30.2/SPRY" evidence="4">
    <location>
        <begin position="53"/>
        <end position="159"/>
    </location>
</feature>
<feature type="glycosylation site" description="N-linked (GlcNAc...) asparagine" evidence="3">
    <location>
        <position position="195"/>
    </location>
</feature>
<reference key="1">
    <citation type="journal article" date="2011" name="Toxicon">
        <title>A high-throughput venom-gland transcriptome for the eastern diamondback rattlesnake (Crotalus adamanteus) and evidence for pervasive positive selection across toxin classes.</title>
        <authorList>
            <person name="Rokyta D.R."/>
            <person name="Wray K.P."/>
            <person name="Lemmon A.R."/>
            <person name="Lemmon E.M."/>
            <person name="Caudle S.B."/>
        </authorList>
    </citation>
    <scope>NUCLEOTIDE SEQUENCE [MRNA]</scope>
    <source>
        <tissue>Venom gland</tissue>
    </source>
</reference>
<reference key="2">
    <citation type="journal article" date="2012" name="BMC Genomics">
        <title>The venom-gland transcriptome of the eastern diamondback rattlesnake (Crotalus adamanteus).</title>
        <authorList>
            <person name="Rokyta D.R."/>
            <person name="Lemmon A.R."/>
            <person name="Margres M.J."/>
            <person name="Aronow K."/>
        </authorList>
    </citation>
    <scope>NUCLEOTIDE SEQUENCE [MRNA]</scope>
    <source>
        <tissue>Venom gland</tissue>
    </source>
</reference>
<reference key="3">
    <citation type="journal article" date="2014" name="J. Proteomics">
        <title>Linking the transcriptome and proteome to characterize the venom of the eastern diamondback rattlesnake (Crotalus adamanteus).</title>
        <authorList>
            <person name="Margres M.J."/>
            <person name="McGivern J.J."/>
            <person name="Wray K.P."/>
            <person name="Seavy M."/>
            <person name="Calvin K."/>
            <person name="Rokyta D.R."/>
        </authorList>
    </citation>
    <scope>IDENTIFICATION BY MASS SPECTROMETRY</scope>
    <scope>SUBCELLULAR LOCATION</scope>
    <source>
        <tissue>Venom</tissue>
    </source>
</reference>